<organism>
    <name type="scientific">Synechococcus sp. (strain RCC307)</name>
    <dbReference type="NCBI Taxonomy" id="316278"/>
    <lineage>
        <taxon>Bacteria</taxon>
        <taxon>Bacillati</taxon>
        <taxon>Cyanobacteriota</taxon>
        <taxon>Cyanophyceae</taxon>
        <taxon>Synechococcales</taxon>
        <taxon>Synechococcaceae</taxon>
        <taxon>Synechococcus</taxon>
    </lineage>
</organism>
<reference key="1">
    <citation type="submission" date="2006-05" db="EMBL/GenBank/DDBJ databases">
        <authorList>
            <consortium name="Genoscope"/>
        </authorList>
    </citation>
    <scope>NUCLEOTIDE SEQUENCE [LARGE SCALE GENOMIC DNA]</scope>
    <source>
        <strain>RCC307</strain>
    </source>
</reference>
<keyword id="KW-0067">ATP-binding</keyword>
<keyword id="KW-0173">Coenzyme A biosynthesis</keyword>
<keyword id="KW-0963">Cytoplasm</keyword>
<keyword id="KW-0460">Magnesium</keyword>
<keyword id="KW-0547">Nucleotide-binding</keyword>
<keyword id="KW-0548">Nucleotidyltransferase</keyword>
<keyword id="KW-1185">Reference proteome</keyword>
<keyword id="KW-0808">Transferase</keyword>
<feature type="chain" id="PRO_1000011263" description="Phosphopantetheine adenylyltransferase">
    <location>
        <begin position="1"/>
        <end position="166"/>
    </location>
</feature>
<feature type="binding site" evidence="1">
    <location>
        <begin position="8"/>
        <end position="9"/>
    </location>
    <ligand>
        <name>ATP</name>
        <dbReference type="ChEBI" id="CHEBI:30616"/>
    </ligand>
</feature>
<feature type="binding site" evidence="1">
    <location>
        <position position="8"/>
    </location>
    <ligand>
        <name>substrate</name>
    </ligand>
</feature>
<feature type="binding site" evidence="1">
    <location>
        <position position="16"/>
    </location>
    <ligand>
        <name>ATP</name>
        <dbReference type="ChEBI" id="CHEBI:30616"/>
    </ligand>
</feature>
<feature type="binding site" evidence="1">
    <location>
        <position position="40"/>
    </location>
    <ligand>
        <name>substrate</name>
    </ligand>
</feature>
<feature type="binding site" evidence="1">
    <location>
        <position position="72"/>
    </location>
    <ligand>
        <name>substrate</name>
    </ligand>
</feature>
<feature type="binding site" evidence="1">
    <location>
        <position position="86"/>
    </location>
    <ligand>
        <name>substrate</name>
    </ligand>
</feature>
<feature type="binding site" evidence="1">
    <location>
        <begin position="87"/>
        <end position="89"/>
    </location>
    <ligand>
        <name>ATP</name>
        <dbReference type="ChEBI" id="CHEBI:30616"/>
    </ligand>
</feature>
<feature type="binding site" evidence="1">
    <location>
        <position position="97"/>
    </location>
    <ligand>
        <name>ATP</name>
        <dbReference type="ChEBI" id="CHEBI:30616"/>
    </ligand>
</feature>
<feature type="binding site" evidence="1">
    <location>
        <begin position="122"/>
        <end position="128"/>
    </location>
    <ligand>
        <name>ATP</name>
        <dbReference type="ChEBI" id="CHEBI:30616"/>
    </ligand>
</feature>
<feature type="site" description="Transition state stabilizer" evidence="1">
    <location>
        <position position="16"/>
    </location>
</feature>
<evidence type="ECO:0000255" key="1">
    <source>
        <dbReference type="HAMAP-Rule" id="MF_00151"/>
    </source>
</evidence>
<dbReference type="EC" id="2.7.7.3" evidence="1"/>
<dbReference type="EMBL" id="CT978603">
    <property type="protein sequence ID" value="CAK28099.1"/>
    <property type="molecule type" value="Genomic_DNA"/>
</dbReference>
<dbReference type="SMR" id="A5GT90"/>
<dbReference type="STRING" id="316278.SynRCC307_1196"/>
<dbReference type="KEGG" id="syr:SynRCC307_1196"/>
<dbReference type="eggNOG" id="COG0669">
    <property type="taxonomic scope" value="Bacteria"/>
</dbReference>
<dbReference type="HOGENOM" id="CLU_100149_0_0_3"/>
<dbReference type="OrthoDB" id="9806661at2"/>
<dbReference type="UniPathway" id="UPA00241">
    <property type="reaction ID" value="UER00355"/>
</dbReference>
<dbReference type="Proteomes" id="UP000001115">
    <property type="component" value="Chromosome"/>
</dbReference>
<dbReference type="GO" id="GO:0005737">
    <property type="term" value="C:cytoplasm"/>
    <property type="evidence" value="ECO:0007669"/>
    <property type="project" value="UniProtKB-SubCell"/>
</dbReference>
<dbReference type="GO" id="GO:0005524">
    <property type="term" value="F:ATP binding"/>
    <property type="evidence" value="ECO:0007669"/>
    <property type="project" value="UniProtKB-KW"/>
</dbReference>
<dbReference type="GO" id="GO:0004595">
    <property type="term" value="F:pantetheine-phosphate adenylyltransferase activity"/>
    <property type="evidence" value="ECO:0007669"/>
    <property type="project" value="UniProtKB-UniRule"/>
</dbReference>
<dbReference type="GO" id="GO:0015937">
    <property type="term" value="P:coenzyme A biosynthetic process"/>
    <property type="evidence" value="ECO:0007669"/>
    <property type="project" value="UniProtKB-UniRule"/>
</dbReference>
<dbReference type="CDD" id="cd02163">
    <property type="entry name" value="PPAT"/>
    <property type="match status" value="1"/>
</dbReference>
<dbReference type="Gene3D" id="3.40.50.620">
    <property type="entry name" value="HUPs"/>
    <property type="match status" value="1"/>
</dbReference>
<dbReference type="HAMAP" id="MF_00151">
    <property type="entry name" value="PPAT_bact"/>
    <property type="match status" value="1"/>
</dbReference>
<dbReference type="InterPro" id="IPR004821">
    <property type="entry name" value="Cyt_trans-like"/>
</dbReference>
<dbReference type="InterPro" id="IPR001980">
    <property type="entry name" value="PPAT"/>
</dbReference>
<dbReference type="InterPro" id="IPR014729">
    <property type="entry name" value="Rossmann-like_a/b/a_fold"/>
</dbReference>
<dbReference type="NCBIfam" id="TIGR01510">
    <property type="entry name" value="coaD_prev_kdtB"/>
    <property type="match status" value="1"/>
</dbReference>
<dbReference type="NCBIfam" id="TIGR00125">
    <property type="entry name" value="cyt_tran_rel"/>
    <property type="match status" value="1"/>
</dbReference>
<dbReference type="PANTHER" id="PTHR21342">
    <property type="entry name" value="PHOSPHOPANTETHEINE ADENYLYLTRANSFERASE"/>
    <property type="match status" value="1"/>
</dbReference>
<dbReference type="PANTHER" id="PTHR21342:SF1">
    <property type="entry name" value="PHOSPHOPANTETHEINE ADENYLYLTRANSFERASE"/>
    <property type="match status" value="1"/>
</dbReference>
<dbReference type="Pfam" id="PF01467">
    <property type="entry name" value="CTP_transf_like"/>
    <property type="match status" value="1"/>
</dbReference>
<dbReference type="PRINTS" id="PR01020">
    <property type="entry name" value="LPSBIOSNTHSS"/>
</dbReference>
<dbReference type="SUPFAM" id="SSF52374">
    <property type="entry name" value="Nucleotidylyl transferase"/>
    <property type="match status" value="1"/>
</dbReference>
<protein>
    <recommendedName>
        <fullName evidence="1">Phosphopantetheine adenylyltransferase</fullName>
        <ecNumber evidence="1">2.7.7.3</ecNumber>
    </recommendedName>
    <alternativeName>
        <fullName evidence="1">Dephospho-CoA pyrophosphorylase</fullName>
    </alternativeName>
    <alternativeName>
        <fullName evidence="1">Pantetheine-phosphate adenylyltransferase</fullName>
        <shortName evidence="1">PPAT</shortName>
    </alternativeName>
</protein>
<sequence>MRALYPGSFDPVTFGHLDLIQRASQLFDEVIVAVLRNPNKQPSFSLEERLEQLSSVTSHLPQVRVTSFEGLTVHFALEQDARVILRGLRALSDFEFELQLAHTNASLSGQVDTLFMATAVPHSFLSSSVVKEVARFGGDVQHLVPETVAIDLRRLFNQRVDVGGDR</sequence>
<proteinExistence type="inferred from homology"/>
<gene>
    <name evidence="1" type="primary">coaD</name>
    <name type="ordered locus">SynRCC307_1196</name>
</gene>
<name>COAD_SYNR3</name>
<accession>A5GT90</accession>
<comment type="function">
    <text evidence="1">Reversibly transfers an adenylyl group from ATP to 4'-phosphopantetheine, yielding dephospho-CoA (dPCoA) and pyrophosphate.</text>
</comment>
<comment type="catalytic activity">
    <reaction evidence="1">
        <text>(R)-4'-phosphopantetheine + ATP + H(+) = 3'-dephospho-CoA + diphosphate</text>
        <dbReference type="Rhea" id="RHEA:19801"/>
        <dbReference type="ChEBI" id="CHEBI:15378"/>
        <dbReference type="ChEBI" id="CHEBI:30616"/>
        <dbReference type="ChEBI" id="CHEBI:33019"/>
        <dbReference type="ChEBI" id="CHEBI:57328"/>
        <dbReference type="ChEBI" id="CHEBI:61723"/>
        <dbReference type="EC" id="2.7.7.3"/>
    </reaction>
</comment>
<comment type="cofactor">
    <cofactor evidence="1">
        <name>Mg(2+)</name>
        <dbReference type="ChEBI" id="CHEBI:18420"/>
    </cofactor>
</comment>
<comment type="pathway">
    <text evidence="1">Cofactor biosynthesis; coenzyme A biosynthesis; CoA from (R)-pantothenate: step 4/5.</text>
</comment>
<comment type="subunit">
    <text evidence="1">Homohexamer.</text>
</comment>
<comment type="subcellular location">
    <subcellularLocation>
        <location evidence="1">Cytoplasm</location>
    </subcellularLocation>
</comment>
<comment type="similarity">
    <text evidence="1">Belongs to the bacterial CoaD family.</text>
</comment>